<feature type="chain" id="PRO_0000256364" description="Chorismate synthase">
    <location>
        <begin position="1"/>
        <end position="361"/>
    </location>
</feature>
<feature type="binding site" evidence="1">
    <location>
        <position position="48"/>
    </location>
    <ligand>
        <name>NADP(+)</name>
        <dbReference type="ChEBI" id="CHEBI:58349"/>
    </ligand>
</feature>
<feature type="binding site" evidence="1">
    <location>
        <position position="54"/>
    </location>
    <ligand>
        <name>NADP(+)</name>
        <dbReference type="ChEBI" id="CHEBI:58349"/>
    </ligand>
</feature>
<feature type="binding site" evidence="1">
    <location>
        <begin position="125"/>
        <end position="127"/>
    </location>
    <ligand>
        <name>FMN</name>
        <dbReference type="ChEBI" id="CHEBI:58210"/>
    </ligand>
</feature>
<feature type="binding site" evidence="1">
    <location>
        <begin position="238"/>
        <end position="239"/>
    </location>
    <ligand>
        <name>FMN</name>
        <dbReference type="ChEBI" id="CHEBI:58210"/>
    </ligand>
</feature>
<feature type="binding site" evidence="1">
    <location>
        <position position="278"/>
    </location>
    <ligand>
        <name>FMN</name>
        <dbReference type="ChEBI" id="CHEBI:58210"/>
    </ligand>
</feature>
<feature type="binding site" evidence="1">
    <location>
        <begin position="293"/>
        <end position="297"/>
    </location>
    <ligand>
        <name>FMN</name>
        <dbReference type="ChEBI" id="CHEBI:58210"/>
    </ligand>
</feature>
<feature type="binding site" evidence="1">
    <location>
        <position position="319"/>
    </location>
    <ligand>
        <name>FMN</name>
        <dbReference type="ChEBI" id="CHEBI:58210"/>
    </ligand>
</feature>
<sequence>MAGNSIGQFFRVTTFGESHGIALGCIIDGVPPGIPITEADIQLDLDRRRPGTSRYTTQRRELDQVRILSGVFEGVTTGTSIGLMIENTDQRSQDYSAIKDVFRPGHADYTYEQKYGVRDYRGGGRSSARETAMRVAAGAIAKKYLAQKFGVQVRGYLAQMGDVSCDLLDWDLVEQNPFFCPDASKLEPLDALMRELKKAGDSIGAKITVVAENVPVGLGEPVFDRLDADLAHALMSINAVKGVEIGDGFAVVTKRGSENRDEITPQGFQSNHAGGILGGISSGQPVVAHIALKPTSSIMVPGQTINRQGEAVEMVTRGRHDPCVGIRAVPIAEAMMAIVLMDHLLRQRAQCGDVASDVPRW</sequence>
<gene>
    <name evidence="1" type="primary">aroC</name>
    <name type="ordered locus">YPN_2195</name>
    <name type="ORF">YP516_2459</name>
</gene>
<dbReference type="EC" id="4.2.3.5" evidence="1"/>
<dbReference type="EMBL" id="CP000305">
    <property type="protein sequence ID" value="ABG18524.1"/>
    <property type="molecule type" value="Genomic_DNA"/>
</dbReference>
<dbReference type="EMBL" id="ACNQ01000013">
    <property type="protein sequence ID" value="EEO76262.1"/>
    <property type="molecule type" value="Genomic_DNA"/>
</dbReference>
<dbReference type="RefSeq" id="WP_002209711.1">
    <property type="nucleotide sequence ID" value="NZ_ACNQ01000013.1"/>
</dbReference>
<dbReference type="SMR" id="Q1CHK6"/>
<dbReference type="GeneID" id="57975938"/>
<dbReference type="KEGG" id="ypn:YPN_2195"/>
<dbReference type="HOGENOM" id="CLU_034547_0_2_6"/>
<dbReference type="UniPathway" id="UPA00053">
    <property type="reaction ID" value="UER00090"/>
</dbReference>
<dbReference type="Proteomes" id="UP000008936">
    <property type="component" value="Chromosome"/>
</dbReference>
<dbReference type="GO" id="GO:0005829">
    <property type="term" value="C:cytosol"/>
    <property type="evidence" value="ECO:0007669"/>
    <property type="project" value="TreeGrafter"/>
</dbReference>
<dbReference type="GO" id="GO:0004107">
    <property type="term" value="F:chorismate synthase activity"/>
    <property type="evidence" value="ECO:0007669"/>
    <property type="project" value="UniProtKB-UniRule"/>
</dbReference>
<dbReference type="GO" id="GO:0010181">
    <property type="term" value="F:FMN binding"/>
    <property type="evidence" value="ECO:0007669"/>
    <property type="project" value="TreeGrafter"/>
</dbReference>
<dbReference type="GO" id="GO:0008652">
    <property type="term" value="P:amino acid biosynthetic process"/>
    <property type="evidence" value="ECO:0007669"/>
    <property type="project" value="UniProtKB-KW"/>
</dbReference>
<dbReference type="GO" id="GO:0009073">
    <property type="term" value="P:aromatic amino acid family biosynthetic process"/>
    <property type="evidence" value="ECO:0007669"/>
    <property type="project" value="UniProtKB-KW"/>
</dbReference>
<dbReference type="GO" id="GO:0009423">
    <property type="term" value="P:chorismate biosynthetic process"/>
    <property type="evidence" value="ECO:0007669"/>
    <property type="project" value="UniProtKB-UniRule"/>
</dbReference>
<dbReference type="CDD" id="cd07304">
    <property type="entry name" value="Chorismate_synthase"/>
    <property type="match status" value="1"/>
</dbReference>
<dbReference type="FunFam" id="3.60.150.10:FF:000001">
    <property type="entry name" value="Chorismate synthase"/>
    <property type="match status" value="1"/>
</dbReference>
<dbReference type="Gene3D" id="3.60.150.10">
    <property type="entry name" value="Chorismate synthase AroC"/>
    <property type="match status" value="1"/>
</dbReference>
<dbReference type="HAMAP" id="MF_00300">
    <property type="entry name" value="Chorismate_synth"/>
    <property type="match status" value="1"/>
</dbReference>
<dbReference type="InterPro" id="IPR000453">
    <property type="entry name" value="Chorismate_synth"/>
</dbReference>
<dbReference type="InterPro" id="IPR035904">
    <property type="entry name" value="Chorismate_synth_AroC_sf"/>
</dbReference>
<dbReference type="InterPro" id="IPR020541">
    <property type="entry name" value="Chorismate_synthase_CS"/>
</dbReference>
<dbReference type="NCBIfam" id="TIGR00033">
    <property type="entry name" value="aroC"/>
    <property type="match status" value="1"/>
</dbReference>
<dbReference type="NCBIfam" id="NF003793">
    <property type="entry name" value="PRK05382.1"/>
    <property type="match status" value="1"/>
</dbReference>
<dbReference type="PANTHER" id="PTHR21085">
    <property type="entry name" value="CHORISMATE SYNTHASE"/>
    <property type="match status" value="1"/>
</dbReference>
<dbReference type="PANTHER" id="PTHR21085:SF0">
    <property type="entry name" value="CHORISMATE SYNTHASE"/>
    <property type="match status" value="1"/>
</dbReference>
<dbReference type="Pfam" id="PF01264">
    <property type="entry name" value="Chorismate_synt"/>
    <property type="match status" value="1"/>
</dbReference>
<dbReference type="PIRSF" id="PIRSF001456">
    <property type="entry name" value="Chorismate_synth"/>
    <property type="match status" value="1"/>
</dbReference>
<dbReference type="SUPFAM" id="SSF103263">
    <property type="entry name" value="Chorismate synthase, AroC"/>
    <property type="match status" value="1"/>
</dbReference>
<dbReference type="PROSITE" id="PS00787">
    <property type="entry name" value="CHORISMATE_SYNTHASE_1"/>
    <property type="match status" value="1"/>
</dbReference>
<dbReference type="PROSITE" id="PS00788">
    <property type="entry name" value="CHORISMATE_SYNTHASE_2"/>
    <property type="match status" value="1"/>
</dbReference>
<dbReference type="PROSITE" id="PS00789">
    <property type="entry name" value="CHORISMATE_SYNTHASE_3"/>
    <property type="match status" value="1"/>
</dbReference>
<evidence type="ECO:0000255" key="1">
    <source>
        <dbReference type="HAMAP-Rule" id="MF_00300"/>
    </source>
</evidence>
<protein>
    <recommendedName>
        <fullName evidence="1">Chorismate synthase</fullName>
        <shortName evidence="1">CS</shortName>
        <ecNumber evidence="1">4.2.3.5</ecNumber>
    </recommendedName>
    <alternativeName>
        <fullName evidence="1">5-enolpyruvylshikimate-3-phosphate phospholyase</fullName>
    </alternativeName>
</protein>
<keyword id="KW-0028">Amino-acid biosynthesis</keyword>
<keyword id="KW-0057">Aromatic amino acid biosynthesis</keyword>
<keyword id="KW-0274">FAD</keyword>
<keyword id="KW-0285">Flavoprotein</keyword>
<keyword id="KW-0288">FMN</keyword>
<keyword id="KW-0456">Lyase</keyword>
<keyword id="KW-0521">NADP</keyword>
<comment type="function">
    <text evidence="1">Catalyzes the anti-1,4-elimination of the C-3 phosphate and the C-6 proR hydrogen from 5-enolpyruvylshikimate-3-phosphate (EPSP) to yield chorismate, which is the branch point compound that serves as the starting substrate for the three terminal pathways of aromatic amino acid biosynthesis. This reaction introduces a second double bond into the aromatic ring system.</text>
</comment>
<comment type="catalytic activity">
    <reaction evidence="1">
        <text>5-O-(1-carboxyvinyl)-3-phosphoshikimate = chorismate + phosphate</text>
        <dbReference type="Rhea" id="RHEA:21020"/>
        <dbReference type="ChEBI" id="CHEBI:29748"/>
        <dbReference type="ChEBI" id="CHEBI:43474"/>
        <dbReference type="ChEBI" id="CHEBI:57701"/>
        <dbReference type="EC" id="4.2.3.5"/>
    </reaction>
</comment>
<comment type="cofactor">
    <cofactor evidence="1">
        <name>FMNH2</name>
        <dbReference type="ChEBI" id="CHEBI:57618"/>
    </cofactor>
    <text evidence="1">Reduced FMN (FMNH(2)).</text>
</comment>
<comment type="pathway">
    <text evidence="1">Metabolic intermediate biosynthesis; chorismate biosynthesis; chorismate from D-erythrose 4-phosphate and phosphoenolpyruvate: step 7/7.</text>
</comment>
<comment type="subunit">
    <text evidence="1">Homotetramer.</text>
</comment>
<comment type="similarity">
    <text evidence="1">Belongs to the chorismate synthase family.</text>
</comment>
<reference key="1">
    <citation type="journal article" date="2006" name="J. Bacteriol.">
        <title>Complete genome sequence of Yersinia pestis strains Antiqua and Nepal516: evidence of gene reduction in an emerging pathogen.</title>
        <authorList>
            <person name="Chain P.S.G."/>
            <person name="Hu P."/>
            <person name="Malfatti S.A."/>
            <person name="Radnedge L."/>
            <person name="Larimer F."/>
            <person name="Vergez L.M."/>
            <person name="Worsham P."/>
            <person name="Chu M.C."/>
            <person name="Andersen G.L."/>
        </authorList>
    </citation>
    <scope>NUCLEOTIDE SEQUENCE [LARGE SCALE GENOMIC DNA]</scope>
    <source>
        <strain>Nepal516</strain>
    </source>
</reference>
<reference key="2">
    <citation type="submission" date="2009-04" db="EMBL/GenBank/DDBJ databases">
        <title>Yersinia pestis Nepal516A whole genome shotgun sequencing project.</title>
        <authorList>
            <person name="Plunkett G. III"/>
            <person name="Anderson B.D."/>
            <person name="Baumler D.J."/>
            <person name="Burland V."/>
            <person name="Cabot E.L."/>
            <person name="Glasner J.D."/>
            <person name="Mau B."/>
            <person name="Neeno-Eckwall E."/>
            <person name="Perna N.T."/>
            <person name="Munk A.C."/>
            <person name="Tapia R."/>
            <person name="Green L.D."/>
            <person name="Rogers Y.C."/>
            <person name="Detter J.C."/>
            <person name="Bruce D.C."/>
            <person name="Brettin T.S."/>
        </authorList>
    </citation>
    <scope>NUCLEOTIDE SEQUENCE [LARGE SCALE GENOMIC DNA]</scope>
    <source>
        <strain>Nepal516</strain>
    </source>
</reference>
<proteinExistence type="inferred from homology"/>
<accession>Q1CHK6</accession>
<accession>C4GU75</accession>
<name>AROC_YERPN</name>
<organism>
    <name type="scientific">Yersinia pestis bv. Antiqua (strain Nepal516)</name>
    <dbReference type="NCBI Taxonomy" id="377628"/>
    <lineage>
        <taxon>Bacteria</taxon>
        <taxon>Pseudomonadati</taxon>
        <taxon>Pseudomonadota</taxon>
        <taxon>Gammaproteobacteria</taxon>
        <taxon>Enterobacterales</taxon>
        <taxon>Yersiniaceae</taxon>
        <taxon>Yersinia</taxon>
    </lineage>
</organism>